<evidence type="ECO:0000255" key="1">
    <source>
        <dbReference type="HAMAP-Rule" id="MF_00608"/>
    </source>
</evidence>
<keyword id="KW-0342">GTP-binding</keyword>
<keyword id="KW-0378">Hydrolase</keyword>
<keyword id="KW-0547">Nucleotide-binding</keyword>
<feature type="chain" id="PRO_1000147164" description="GTP cyclohydrolase III">
    <location>
        <begin position="1"/>
        <end position="221"/>
    </location>
</feature>
<name>GCH3_PYRIL</name>
<dbReference type="EC" id="3.5.4.29" evidence="1"/>
<dbReference type="EMBL" id="CP000504">
    <property type="protein sequence ID" value="ABL87562.1"/>
    <property type="molecule type" value="Genomic_DNA"/>
</dbReference>
<dbReference type="RefSeq" id="WP_011762139.1">
    <property type="nucleotide sequence ID" value="NC_008701.1"/>
</dbReference>
<dbReference type="SMR" id="A1RRI0"/>
<dbReference type="STRING" id="384616.Pisl_0384"/>
<dbReference type="GeneID" id="4616880"/>
<dbReference type="KEGG" id="pis:Pisl_0384"/>
<dbReference type="eggNOG" id="arCOG04202">
    <property type="taxonomic scope" value="Archaea"/>
</dbReference>
<dbReference type="HOGENOM" id="CLU_080076_0_0_2"/>
<dbReference type="OrthoDB" id="25211at2157"/>
<dbReference type="Proteomes" id="UP000002595">
    <property type="component" value="Chromosome"/>
</dbReference>
<dbReference type="GO" id="GO:0005525">
    <property type="term" value="F:GTP binding"/>
    <property type="evidence" value="ECO:0007669"/>
    <property type="project" value="UniProtKB-KW"/>
</dbReference>
<dbReference type="GO" id="GO:0043740">
    <property type="term" value="F:GTP cyclohydrolase IIa activity"/>
    <property type="evidence" value="ECO:0007669"/>
    <property type="project" value="UniProtKB-EC"/>
</dbReference>
<dbReference type="GO" id="GO:0009058">
    <property type="term" value="P:biosynthetic process"/>
    <property type="evidence" value="ECO:0007669"/>
    <property type="project" value="InterPro"/>
</dbReference>
<dbReference type="Gene3D" id="3.30.70.270">
    <property type="match status" value="1"/>
</dbReference>
<dbReference type="Gene3D" id="3.30.70.1230">
    <property type="entry name" value="Nucleotide cyclase"/>
    <property type="match status" value="1"/>
</dbReference>
<dbReference type="HAMAP" id="MF_00608">
    <property type="entry name" value="GTP_cyclohydro_3"/>
    <property type="match status" value="1"/>
</dbReference>
<dbReference type="InterPro" id="IPR007839">
    <property type="entry name" value="GTP_CycHdrlase_3"/>
</dbReference>
<dbReference type="InterPro" id="IPR029787">
    <property type="entry name" value="Nucleotide_cyclase"/>
</dbReference>
<dbReference type="InterPro" id="IPR043128">
    <property type="entry name" value="Rev_trsase/Diguanyl_cyclase"/>
</dbReference>
<dbReference type="PANTHER" id="PTHR42202">
    <property type="entry name" value="GTP CYCLOHYDROLASE III"/>
    <property type="match status" value="1"/>
</dbReference>
<dbReference type="PANTHER" id="PTHR42202:SF1">
    <property type="entry name" value="GTP CYCLOHYDROLASE III"/>
    <property type="match status" value="1"/>
</dbReference>
<dbReference type="Pfam" id="PF05165">
    <property type="entry name" value="GCH_III"/>
    <property type="match status" value="2"/>
</dbReference>
<dbReference type="PIRSF" id="PIRSF009265">
    <property type="entry name" value="GTP_cyclohydro_3"/>
    <property type="match status" value="1"/>
</dbReference>
<reference key="1">
    <citation type="submission" date="2006-12" db="EMBL/GenBank/DDBJ databases">
        <title>Complete sequence of Pyrobaculum islandicum DSM 4184.</title>
        <authorList>
            <person name="Copeland A."/>
            <person name="Lucas S."/>
            <person name="Lapidus A."/>
            <person name="Barry K."/>
            <person name="Detter J.C."/>
            <person name="Glavina del Rio T."/>
            <person name="Dalin E."/>
            <person name="Tice H."/>
            <person name="Pitluck S."/>
            <person name="Meincke L."/>
            <person name="Brettin T."/>
            <person name="Bruce D."/>
            <person name="Han C."/>
            <person name="Tapia R."/>
            <person name="Gilna P."/>
            <person name="Schmutz J."/>
            <person name="Larimer F."/>
            <person name="Land M."/>
            <person name="Hauser L."/>
            <person name="Kyrpides N."/>
            <person name="Mikhailova N."/>
            <person name="Cozen A.E."/>
            <person name="Fitz-Gibbon S.T."/>
            <person name="House C.H."/>
            <person name="Saltikov C."/>
            <person name="Lowe T."/>
            <person name="Richardson P."/>
        </authorList>
    </citation>
    <scope>NUCLEOTIDE SEQUENCE [LARGE SCALE GENOMIC DNA]</scope>
    <source>
        <strain>DSM 4184 / JCM 9189 / GEO3</strain>
    </source>
</reference>
<gene>
    <name evidence="1" type="primary">gch3</name>
    <name type="ordered locus">Pisl_0384</name>
</gene>
<accession>A1RRI0</accession>
<proteinExistence type="inferred from homology"/>
<comment type="function">
    <text evidence="1">Catalyzes the formation of 2-amino-5-formylamino-6-ribofuranosylamino-4(3H)-pyrimidinone ribonucleotide monophosphate and inorganic phosphate from GTP. Also has an independent pyrophosphate phosphohydrolase activity.</text>
</comment>
<comment type="catalytic activity">
    <reaction evidence="1">
        <text>GTP + 3 H2O = 2-amino-5-formylamino-6-(5-phospho-D-ribosylamino)pyrimidin-4(3H)-one + 2 phosphate + 2 H(+)</text>
        <dbReference type="Rhea" id="RHEA:22468"/>
        <dbReference type="ChEBI" id="CHEBI:15377"/>
        <dbReference type="ChEBI" id="CHEBI:15378"/>
        <dbReference type="ChEBI" id="CHEBI:37565"/>
        <dbReference type="ChEBI" id="CHEBI:43474"/>
        <dbReference type="ChEBI" id="CHEBI:57258"/>
        <dbReference type="EC" id="3.5.4.29"/>
    </reaction>
</comment>
<comment type="similarity">
    <text evidence="1">Belongs to the archaeal-type GTP cyclohydrolase family.</text>
</comment>
<sequence length="221" mass="24604">MHGIAVIELKGYREWTESLGPRREHIIQQIQAKLHATLWKSFTTVGALPHHFRYDFFIALVNNISSAAVESAVAKIARHSPVPIDFCIGTGDTPYSAYLNCRGKEVEATSFSIVAHMDIVNSTKTTKLNGPLDVYSHIVRLIDTLLDVCKEYGCLVFYLGGDNTALFLPTPDVINEIVRNIDTRVRVGVGVAKKPYNAFVKATRGLDYLRSTNREGIKIVK</sequence>
<organism>
    <name type="scientific">Pyrobaculum islandicum (strain DSM 4184 / JCM 9189 / GEO3)</name>
    <dbReference type="NCBI Taxonomy" id="384616"/>
    <lineage>
        <taxon>Archaea</taxon>
        <taxon>Thermoproteota</taxon>
        <taxon>Thermoprotei</taxon>
        <taxon>Thermoproteales</taxon>
        <taxon>Thermoproteaceae</taxon>
        <taxon>Pyrobaculum</taxon>
    </lineage>
</organism>
<protein>
    <recommendedName>
        <fullName evidence="1">GTP cyclohydrolase III</fullName>
        <ecNumber evidence="1">3.5.4.29</ecNumber>
    </recommendedName>
</protein>